<feature type="chain" id="PRO_0000224461" description="Valine--tRNA ligase">
    <location>
        <begin position="1"/>
        <end position="881"/>
    </location>
</feature>
<feature type="coiled-coil region" evidence="1">
    <location>
        <begin position="721"/>
        <end position="747"/>
    </location>
</feature>
<feature type="coiled-coil region" evidence="1">
    <location>
        <begin position="811"/>
        <end position="881"/>
    </location>
</feature>
<feature type="short sequence motif" description="'HIGH' region">
    <location>
        <begin position="48"/>
        <end position="58"/>
    </location>
</feature>
<feature type="short sequence motif" description="'KMSKS' region">
    <location>
        <begin position="527"/>
        <end position="531"/>
    </location>
</feature>
<feature type="binding site" evidence="1">
    <location>
        <position position="530"/>
    </location>
    <ligand>
        <name>ATP</name>
        <dbReference type="ChEBI" id="CHEBI:30616"/>
    </ligand>
</feature>
<proteinExistence type="inferred from homology"/>
<dbReference type="EC" id="6.1.1.9" evidence="1"/>
<dbReference type="EMBL" id="AE001437">
    <property type="protein sequence ID" value="AAK80354.1"/>
    <property type="molecule type" value="Genomic_DNA"/>
</dbReference>
<dbReference type="PIR" id="G97195">
    <property type="entry name" value="G97195"/>
</dbReference>
<dbReference type="RefSeq" id="NP_349014.1">
    <property type="nucleotide sequence ID" value="NC_003030.1"/>
</dbReference>
<dbReference type="RefSeq" id="WP_010965695.1">
    <property type="nucleotide sequence ID" value="NC_003030.1"/>
</dbReference>
<dbReference type="SMR" id="Q97GG8"/>
<dbReference type="STRING" id="272562.CA_C2399"/>
<dbReference type="KEGG" id="cac:CA_C2399"/>
<dbReference type="PATRIC" id="fig|272562.8.peg.2596"/>
<dbReference type="eggNOG" id="COG0525">
    <property type="taxonomic scope" value="Bacteria"/>
</dbReference>
<dbReference type="HOGENOM" id="CLU_001493_0_2_9"/>
<dbReference type="OrthoDB" id="9810365at2"/>
<dbReference type="Proteomes" id="UP000000814">
    <property type="component" value="Chromosome"/>
</dbReference>
<dbReference type="GO" id="GO:0005829">
    <property type="term" value="C:cytosol"/>
    <property type="evidence" value="ECO:0007669"/>
    <property type="project" value="TreeGrafter"/>
</dbReference>
<dbReference type="GO" id="GO:0002161">
    <property type="term" value="F:aminoacyl-tRNA deacylase activity"/>
    <property type="evidence" value="ECO:0007669"/>
    <property type="project" value="InterPro"/>
</dbReference>
<dbReference type="GO" id="GO:0005524">
    <property type="term" value="F:ATP binding"/>
    <property type="evidence" value="ECO:0007669"/>
    <property type="project" value="UniProtKB-UniRule"/>
</dbReference>
<dbReference type="GO" id="GO:0004832">
    <property type="term" value="F:valine-tRNA ligase activity"/>
    <property type="evidence" value="ECO:0007669"/>
    <property type="project" value="UniProtKB-UniRule"/>
</dbReference>
<dbReference type="GO" id="GO:0006438">
    <property type="term" value="P:valyl-tRNA aminoacylation"/>
    <property type="evidence" value="ECO:0007669"/>
    <property type="project" value="UniProtKB-UniRule"/>
</dbReference>
<dbReference type="CDD" id="cd07962">
    <property type="entry name" value="Anticodon_Ia_Val"/>
    <property type="match status" value="1"/>
</dbReference>
<dbReference type="CDD" id="cd00817">
    <property type="entry name" value="ValRS_core"/>
    <property type="match status" value="1"/>
</dbReference>
<dbReference type="FunFam" id="1.10.287.380:FF:000001">
    <property type="entry name" value="Valine--tRNA ligase"/>
    <property type="match status" value="1"/>
</dbReference>
<dbReference type="FunFam" id="1.10.730.10:FF:000014">
    <property type="entry name" value="Valine--tRNA ligase"/>
    <property type="match status" value="1"/>
</dbReference>
<dbReference type="FunFam" id="3.40.50.620:FF:000032">
    <property type="entry name" value="Valine--tRNA ligase"/>
    <property type="match status" value="1"/>
</dbReference>
<dbReference type="FunFam" id="3.40.50.620:FF:000098">
    <property type="entry name" value="Valine--tRNA ligase"/>
    <property type="match status" value="1"/>
</dbReference>
<dbReference type="FunFam" id="3.90.740.10:FF:000005">
    <property type="entry name" value="Valine--tRNA ligase, mitochondrial"/>
    <property type="match status" value="1"/>
</dbReference>
<dbReference type="Gene3D" id="3.40.50.620">
    <property type="entry name" value="HUPs"/>
    <property type="match status" value="2"/>
</dbReference>
<dbReference type="Gene3D" id="1.10.730.10">
    <property type="entry name" value="Isoleucyl-tRNA Synthetase, Domain 1"/>
    <property type="match status" value="1"/>
</dbReference>
<dbReference type="Gene3D" id="1.10.287.380">
    <property type="entry name" value="Valyl-tRNA synthetase, C-terminal domain"/>
    <property type="match status" value="1"/>
</dbReference>
<dbReference type="HAMAP" id="MF_02004">
    <property type="entry name" value="Val_tRNA_synth_type1"/>
    <property type="match status" value="1"/>
</dbReference>
<dbReference type="InterPro" id="IPR001412">
    <property type="entry name" value="aa-tRNA-synth_I_CS"/>
</dbReference>
<dbReference type="InterPro" id="IPR002300">
    <property type="entry name" value="aa-tRNA-synth_Ia"/>
</dbReference>
<dbReference type="InterPro" id="IPR033705">
    <property type="entry name" value="Anticodon_Ia_Val"/>
</dbReference>
<dbReference type="InterPro" id="IPR013155">
    <property type="entry name" value="M/V/L/I-tRNA-synth_anticd-bd"/>
</dbReference>
<dbReference type="InterPro" id="IPR014729">
    <property type="entry name" value="Rossmann-like_a/b/a_fold"/>
</dbReference>
<dbReference type="InterPro" id="IPR010978">
    <property type="entry name" value="tRNA-bd_arm"/>
</dbReference>
<dbReference type="InterPro" id="IPR009080">
    <property type="entry name" value="tRNAsynth_Ia_anticodon-bd"/>
</dbReference>
<dbReference type="InterPro" id="IPR037118">
    <property type="entry name" value="Val-tRNA_synth_C_sf"/>
</dbReference>
<dbReference type="InterPro" id="IPR019499">
    <property type="entry name" value="Val-tRNA_synth_tRNA-bd"/>
</dbReference>
<dbReference type="InterPro" id="IPR009008">
    <property type="entry name" value="Val/Leu/Ile-tRNA-synth_edit"/>
</dbReference>
<dbReference type="InterPro" id="IPR002303">
    <property type="entry name" value="Valyl-tRNA_ligase"/>
</dbReference>
<dbReference type="NCBIfam" id="NF004349">
    <property type="entry name" value="PRK05729.1"/>
    <property type="match status" value="1"/>
</dbReference>
<dbReference type="NCBIfam" id="TIGR00422">
    <property type="entry name" value="valS"/>
    <property type="match status" value="1"/>
</dbReference>
<dbReference type="PANTHER" id="PTHR11946:SF93">
    <property type="entry name" value="VALINE--TRNA LIGASE, CHLOROPLASTIC_MITOCHONDRIAL 2"/>
    <property type="match status" value="1"/>
</dbReference>
<dbReference type="PANTHER" id="PTHR11946">
    <property type="entry name" value="VALYL-TRNA SYNTHETASES"/>
    <property type="match status" value="1"/>
</dbReference>
<dbReference type="Pfam" id="PF08264">
    <property type="entry name" value="Anticodon_1"/>
    <property type="match status" value="1"/>
</dbReference>
<dbReference type="Pfam" id="PF00133">
    <property type="entry name" value="tRNA-synt_1"/>
    <property type="match status" value="1"/>
</dbReference>
<dbReference type="Pfam" id="PF10458">
    <property type="entry name" value="Val_tRNA-synt_C"/>
    <property type="match status" value="1"/>
</dbReference>
<dbReference type="PRINTS" id="PR00986">
    <property type="entry name" value="TRNASYNTHVAL"/>
</dbReference>
<dbReference type="SUPFAM" id="SSF47323">
    <property type="entry name" value="Anticodon-binding domain of a subclass of class I aminoacyl-tRNA synthetases"/>
    <property type="match status" value="1"/>
</dbReference>
<dbReference type="SUPFAM" id="SSF52374">
    <property type="entry name" value="Nucleotidylyl transferase"/>
    <property type="match status" value="1"/>
</dbReference>
<dbReference type="SUPFAM" id="SSF46589">
    <property type="entry name" value="tRNA-binding arm"/>
    <property type="match status" value="1"/>
</dbReference>
<dbReference type="SUPFAM" id="SSF50677">
    <property type="entry name" value="ValRS/IleRS/LeuRS editing domain"/>
    <property type="match status" value="1"/>
</dbReference>
<dbReference type="PROSITE" id="PS00178">
    <property type="entry name" value="AA_TRNA_LIGASE_I"/>
    <property type="match status" value="1"/>
</dbReference>
<name>SYV_CLOAB</name>
<comment type="function">
    <text evidence="1">Catalyzes the attachment of valine to tRNA(Val). As ValRS can inadvertently accommodate and process structurally similar amino acids such as threonine, to avoid such errors, it has a 'posttransfer' editing activity that hydrolyzes mischarged Thr-tRNA(Val) in a tRNA-dependent manner.</text>
</comment>
<comment type="catalytic activity">
    <reaction evidence="1">
        <text>tRNA(Val) + L-valine + ATP = L-valyl-tRNA(Val) + AMP + diphosphate</text>
        <dbReference type="Rhea" id="RHEA:10704"/>
        <dbReference type="Rhea" id="RHEA-COMP:9672"/>
        <dbReference type="Rhea" id="RHEA-COMP:9708"/>
        <dbReference type="ChEBI" id="CHEBI:30616"/>
        <dbReference type="ChEBI" id="CHEBI:33019"/>
        <dbReference type="ChEBI" id="CHEBI:57762"/>
        <dbReference type="ChEBI" id="CHEBI:78442"/>
        <dbReference type="ChEBI" id="CHEBI:78537"/>
        <dbReference type="ChEBI" id="CHEBI:456215"/>
        <dbReference type="EC" id="6.1.1.9"/>
    </reaction>
</comment>
<comment type="subunit">
    <text evidence="1">Monomer.</text>
</comment>
<comment type="subcellular location">
    <subcellularLocation>
        <location evidence="1">Cytoplasm</location>
    </subcellularLocation>
</comment>
<comment type="domain">
    <text evidence="1">ValRS has two distinct active sites: one for aminoacylation and one for editing. The misactivated threonine is translocated from the active site to the editing site.</text>
</comment>
<comment type="domain">
    <text evidence="1">The C-terminal coiled-coil domain is crucial for aminoacylation activity.</text>
</comment>
<comment type="similarity">
    <text evidence="1">Belongs to the class-I aminoacyl-tRNA synthetase family. ValS type 1 subfamily.</text>
</comment>
<reference key="1">
    <citation type="journal article" date="2001" name="J. Bacteriol.">
        <title>Genome sequence and comparative analysis of the solvent-producing bacterium Clostridium acetobutylicum.</title>
        <authorList>
            <person name="Noelling J."/>
            <person name="Breton G."/>
            <person name="Omelchenko M.V."/>
            <person name="Makarova K.S."/>
            <person name="Zeng Q."/>
            <person name="Gibson R."/>
            <person name="Lee H.M."/>
            <person name="Dubois J."/>
            <person name="Qiu D."/>
            <person name="Hitti J."/>
            <person name="Wolf Y.I."/>
            <person name="Tatusov R.L."/>
            <person name="Sabathe F."/>
            <person name="Doucette-Stamm L.A."/>
            <person name="Soucaille P."/>
            <person name="Daly M.J."/>
            <person name="Bennett G.N."/>
            <person name="Koonin E.V."/>
            <person name="Smith D.R."/>
        </authorList>
    </citation>
    <scope>NUCLEOTIDE SEQUENCE [LARGE SCALE GENOMIC DNA]</scope>
    <source>
        <strain>ATCC 824 / DSM 792 / JCM 1419 / IAM 19013 / LMG 5710 / NBRC 13948 / NRRL B-527 / VKM B-1787 / 2291 / W</strain>
    </source>
</reference>
<sequence>MKEFDEMAKTYDPKEFEDRIYKWWEEEGFFTPKVDKNKKPYTIMMPPPNITGKLHLGHALDCALQDFMIRAKRMQGYEALWLPGQDHASIATEVRVEKEILKEGLNKKEMGREKFLERVWDWTKEYRERIKGQQKKLGVSADFTRESFTMDEKLNKAVRTVFVKLYEDGLIYQGNRITNWCPKCQTALSDAEIEYKEDQGFFWHIKYPVEGEDSFIEIATTRPETMLGDTAVAVNPKDERYKEFIGKLLVLPLLGRKIPVVADDYVDMEFGTGAVKITPAHDPNDYEVGKRHDLKEIVMLNNDGTIKEGFGKYSGMDRYEARKAIVSDLKEEGYLVKIKEHVHNVGTHDRCGNIIEPMVSKQWYVKMESLAKPAIEAVKAGKTKFVPERFDKIYFNWMENIQDWCISRQLWWGHRIPVWYCKDCGEIIVSEKEPKACSKCNSENLEQDKDVLDTWFSSALWPFSTLGWPDKNEDLEYFYPTDTLVTGYDIIFFWVARMVFSGIYNMGEVPFKHVYIHGLVRDAEGRKMSKSLGNGVDPLDVIDTFGADALRFMLITGNAPGNDIRYKTEKVEAARNFANKIWNASRFVLMNLDKEIMDKYKDLEEYSLADRWILSRCNSLVREVTDNIEKFELGIASQKVYDFMWNEFCDWYIELVKPVMYGEDEKAKGIAYNVLYKVLTVGLQLLHPVMPYITEEIYQHLGGEYKAIAISAWPTYEEKLKNETSENAMNQIIEAIKSIRNVRAEMNVPPSKKAKVMIFTEAENKAAFEMGEHYFEKLAYASSVSFLKSKDEAPENAVSSVTKGAELFMPLLDLIDVTKEIERLSKEKDKLKAEIQRVDKKLSNKGFVDKAPESVVEAERVKGEKYKKMLEAVEERIAALK</sequence>
<accession>Q97GG8</accession>
<evidence type="ECO:0000255" key="1">
    <source>
        <dbReference type="HAMAP-Rule" id="MF_02004"/>
    </source>
</evidence>
<organism>
    <name type="scientific">Clostridium acetobutylicum (strain ATCC 824 / DSM 792 / JCM 1419 / IAM 19013 / LMG 5710 / NBRC 13948 / NRRL B-527 / VKM B-1787 / 2291 / W)</name>
    <dbReference type="NCBI Taxonomy" id="272562"/>
    <lineage>
        <taxon>Bacteria</taxon>
        <taxon>Bacillati</taxon>
        <taxon>Bacillota</taxon>
        <taxon>Clostridia</taxon>
        <taxon>Eubacteriales</taxon>
        <taxon>Clostridiaceae</taxon>
        <taxon>Clostridium</taxon>
    </lineage>
</organism>
<keyword id="KW-0030">Aminoacyl-tRNA synthetase</keyword>
<keyword id="KW-0067">ATP-binding</keyword>
<keyword id="KW-0175">Coiled coil</keyword>
<keyword id="KW-0963">Cytoplasm</keyword>
<keyword id="KW-0436">Ligase</keyword>
<keyword id="KW-0547">Nucleotide-binding</keyword>
<keyword id="KW-0648">Protein biosynthesis</keyword>
<keyword id="KW-1185">Reference proteome</keyword>
<gene>
    <name evidence="1" type="primary">valS</name>
    <name type="ordered locus">CA_C2399</name>
</gene>
<protein>
    <recommendedName>
        <fullName evidence="1">Valine--tRNA ligase</fullName>
        <ecNumber evidence="1">6.1.1.9</ecNumber>
    </recommendedName>
    <alternativeName>
        <fullName evidence="1">Valyl-tRNA synthetase</fullName>
        <shortName evidence="1">ValRS</shortName>
    </alternativeName>
</protein>